<gene>
    <name type="primary">PLA1</name>
    <name type="ordered locus">At1g61850</name>
    <name type="ORF">F8K4.6</name>
</gene>
<accession>F4HX15</accession>
<accession>O80693</accession>
<protein>
    <recommendedName>
        <fullName>Phospholipase A I</fullName>
        <shortName>AtPLA1</shortName>
        <ecNumber>3.1.1.-</ecNumber>
    </recommendedName>
</protein>
<dbReference type="EC" id="3.1.1.-"/>
<dbReference type="EMBL" id="AC004392">
    <property type="protein sequence ID" value="AAC28504.1"/>
    <property type="status" value="ALT_SEQ"/>
    <property type="molecule type" value="Genomic_DNA"/>
</dbReference>
<dbReference type="EMBL" id="CP002684">
    <property type="status" value="NOT_ANNOTATED_CDS"/>
    <property type="molecule type" value="Genomic_DNA"/>
</dbReference>
<dbReference type="PIR" id="T02131">
    <property type="entry name" value="T02131"/>
</dbReference>
<dbReference type="SMR" id="F4HX15"/>
<dbReference type="FunCoup" id="F4HX15">
    <property type="interactions" value="1"/>
</dbReference>
<dbReference type="STRING" id="3702.F4HX15"/>
<dbReference type="GlyGen" id="F4HX15">
    <property type="glycosylation" value="1 site"/>
</dbReference>
<dbReference type="PaxDb" id="3702-AT1G61850.1"/>
<dbReference type="Araport" id="AT1G61850"/>
<dbReference type="TAIR" id="AT1G61850"/>
<dbReference type="eggNOG" id="KOG4231">
    <property type="taxonomic scope" value="Eukaryota"/>
</dbReference>
<dbReference type="HOGENOM" id="CLU_006534_0_0_1"/>
<dbReference type="InParanoid" id="F4HX15"/>
<dbReference type="PRO" id="PR:F4HX15"/>
<dbReference type="Proteomes" id="UP000006548">
    <property type="component" value="Chromosome 1"/>
</dbReference>
<dbReference type="ExpressionAtlas" id="F4HX15">
    <property type="expression patterns" value="baseline and differential"/>
</dbReference>
<dbReference type="GO" id="GO:0009507">
    <property type="term" value="C:chloroplast"/>
    <property type="evidence" value="ECO:0000314"/>
    <property type="project" value="UniProtKB"/>
</dbReference>
<dbReference type="GO" id="GO:0016020">
    <property type="term" value="C:membrane"/>
    <property type="evidence" value="ECO:0000318"/>
    <property type="project" value="GO_Central"/>
</dbReference>
<dbReference type="GO" id="GO:0047372">
    <property type="term" value="F:monoacylglycerol lipase activity"/>
    <property type="evidence" value="ECO:0000314"/>
    <property type="project" value="UniProtKB"/>
</dbReference>
<dbReference type="GO" id="GO:0004620">
    <property type="term" value="F:phospholipase activity"/>
    <property type="evidence" value="ECO:0000314"/>
    <property type="project" value="UniProtKB"/>
</dbReference>
<dbReference type="GO" id="GO:0050832">
    <property type="term" value="P:defense response to fungus"/>
    <property type="evidence" value="ECO:0000315"/>
    <property type="project" value="UniProtKB"/>
</dbReference>
<dbReference type="GO" id="GO:0006631">
    <property type="term" value="P:fatty acid metabolic process"/>
    <property type="evidence" value="ECO:0000318"/>
    <property type="project" value="GO_Central"/>
</dbReference>
<dbReference type="GO" id="GO:0009695">
    <property type="term" value="P:jasmonic acid biosynthetic process"/>
    <property type="evidence" value="ECO:0000315"/>
    <property type="project" value="UniProtKB"/>
</dbReference>
<dbReference type="GO" id="GO:0016042">
    <property type="term" value="P:lipid catabolic process"/>
    <property type="evidence" value="ECO:0007669"/>
    <property type="project" value="UniProtKB-KW"/>
</dbReference>
<dbReference type="CDD" id="cd07211">
    <property type="entry name" value="Pat_PNPLA8"/>
    <property type="match status" value="1"/>
</dbReference>
<dbReference type="FunFam" id="1.25.10.10:FF:000644">
    <property type="entry name" value="Patatin"/>
    <property type="match status" value="1"/>
</dbReference>
<dbReference type="Gene3D" id="3.40.1090.10">
    <property type="entry name" value="Cytosolic phospholipase A2 catalytic domain"/>
    <property type="match status" value="1"/>
</dbReference>
<dbReference type="Gene3D" id="1.25.10.10">
    <property type="entry name" value="Leucine-rich Repeat Variant"/>
    <property type="match status" value="1"/>
</dbReference>
<dbReference type="Gene3D" id="3.80.10.10">
    <property type="entry name" value="Ribonuclease Inhibitor"/>
    <property type="match status" value="1"/>
</dbReference>
<dbReference type="InterPro" id="IPR016035">
    <property type="entry name" value="Acyl_Trfase/lysoPLipase"/>
</dbReference>
<dbReference type="InterPro" id="IPR011989">
    <property type="entry name" value="ARM-like"/>
</dbReference>
<dbReference type="InterPro" id="IPR016024">
    <property type="entry name" value="ARM-type_fold"/>
</dbReference>
<dbReference type="InterPro" id="IPR000225">
    <property type="entry name" value="Armadillo"/>
</dbReference>
<dbReference type="InterPro" id="IPR001611">
    <property type="entry name" value="Leu-rich_rpt"/>
</dbReference>
<dbReference type="InterPro" id="IPR003591">
    <property type="entry name" value="Leu-rich_rpt_typical-subtyp"/>
</dbReference>
<dbReference type="InterPro" id="IPR032675">
    <property type="entry name" value="LRR_dom_sf"/>
</dbReference>
<dbReference type="InterPro" id="IPR045217">
    <property type="entry name" value="PNPLA8-like"/>
</dbReference>
<dbReference type="InterPro" id="IPR002641">
    <property type="entry name" value="PNPLA_dom"/>
</dbReference>
<dbReference type="PANTHER" id="PTHR24185">
    <property type="entry name" value="CALCIUM-INDEPENDENT PHOSPHOLIPASE A2-GAMMA"/>
    <property type="match status" value="1"/>
</dbReference>
<dbReference type="PANTHER" id="PTHR24185:SF1">
    <property type="entry name" value="CALCIUM-INDEPENDENT PHOSPHOLIPASE A2-GAMMA"/>
    <property type="match status" value="1"/>
</dbReference>
<dbReference type="Pfam" id="PF00514">
    <property type="entry name" value="Arm"/>
    <property type="match status" value="1"/>
</dbReference>
<dbReference type="Pfam" id="PF13855">
    <property type="entry name" value="LRR_8"/>
    <property type="match status" value="1"/>
</dbReference>
<dbReference type="Pfam" id="PF01734">
    <property type="entry name" value="Patatin"/>
    <property type="match status" value="1"/>
</dbReference>
<dbReference type="SMART" id="SM00185">
    <property type="entry name" value="ARM"/>
    <property type="match status" value="3"/>
</dbReference>
<dbReference type="SMART" id="SM00369">
    <property type="entry name" value="LRR_TYP"/>
    <property type="match status" value="3"/>
</dbReference>
<dbReference type="SUPFAM" id="SSF48371">
    <property type="entry name" value="ARM repeat"/>
    <property type="match status" value="1"/>
</dbReference>
<dbReference type="SUPFAM" id="SSF52151">
    <property type="entry name" value="FabD/lysophospholipase-like"/>
    <property type="match status" value="1"/>
</dbReference>
<dbReference type="SUPFAM" id="SSF52058">
    <property type="entry name" value="L domain-like"/>
    <property type="match status" value="1"/>
</dbReference>
<dbReference type="PROSITE" id="PS51635">
    <property type="entry name" value="PNPLA"/>
    <property type="match status" value="1"/>
</dbReference>
<keyword id="KW-0025">Alternative splicing</keyword>
<keyword id="KW-0150">Chloroplast</keyword>
<keyword id="KW-0378">Hydrolase</keyword>
<keyword id="KW-0433">Leucine-rich repeat</keyword>
<keyword id="KW-0442">Lipid degradation</keyword>
<keyword id="KW-0443">Lipid metabolism</keyword>
<keyword id="KW-0611">Plant defense</keyword>
<keyword id="KW-0934">Plastid</keyword>
<keyword id="KW-1185">Reference proteome</keyword>
<keyword id="KW-0677">Repeat</keyword>
<evidence type="ECO:0000250" key="1"/>
<evidence type="ECO:0000255" key="2">
    <source>
        <dbReference type="PROSITE-ProRule" id="PRU01161"/>
    </source>
</evidence>
<evidence type="ECO:0000256" key="3">
    <source>
        <dbReference type="SAM" id="MobiDB-lite"/>
    </source>
</evidence>
<evidence type="ECO:0000269" key="4">
    <source>
    </source>
</evidence>
<evidence type="ECO:0000305" key="5"/>
<evidence type="ECO:0000305" key="6">
    <source>
    </source>
</evidence>
<comment type="function">
    <text evidence="4">Possesses non-specific lipolytic acyl hydrolase (LAH) activity. Catalyzes the hydrolysis of the galactolipids monogalactosyldiacylglycerol (MGDG) and digalactosyldiacylglycerol (DGDG), and less efficiently the phoshpolipids phosphatidylcholine (PC), phosphatidylethanolamine (PE), phosphatidylglycerol (PG), phosphatidylserine (PS) and phosphatidylinositol (PI). Hydrolyzes phospholipids at both the sn-1 and sn-2 positions. Involved in basal jasmonic acid production and promotes resistance to the necrotrophic fungal pathogen Botrytis cinerea.</text>
</comment>
<comment type="subcellular location">
    <subcellularLocation>
        <location evidence="6">Plastid</location>
        <location evidence="6">Chloroplast</location>
    </subcellularLocation>
</comment>
<comment type="alternative products">
    <event type="alternative splicing"/>
    <isoform>
        <id>F4HX15-1</id>
        <name>1</name>
        <sequence type="displayed"/>
    </isoform>
    <text>A number of isoforms are produced. According to EST sequences.</text>
</comment>
<comment type="domain">
    <text evidence="1">The nitrogen atoms of the two glycine residues in the GGXR motif define the oxyanion hole, and stabilize the oxyanion that forms during the nucleophilic attack by the catalytic serine during substrate cleavage.</text>
</comment>
<comment type="disruption phenotype">
    <text evidence="4">No visible phenotype under normal growth conditions, but mutant plants have reduced basal level of jasmonic acid and exhibit increased susceptibility to the fungal pathogen Botrytis cinerea.</text>
</comment>
<comment type="similarity">
    <text evidence="5">Belongs to the patatin family.</text>
</comment>
<comment type="sequence caution" evidence="5">
    <conflict type="erroneous gene model prediction">
        <sequence resource="EMBL-CDS" id="AAC28504"/>
    </conflict>
</comment>
<feature type="chain" id="PRO_0000425828" description="Phospholipase A I">
    <location>
        <begin position="1"/>
        <end position="1309"/>
    </location>
</feature>
<feature type="repeat" description="LRR 1">
    <location>
        <begin position="155"/>
        <end position="178"/>
    </location>
</feature>
<feature type="repeat" description="LRR 2">
    <location>
        <begin position="180"/>
        <end position="201"/>
    </location>
</feature>
<feature type="repeat" description="LRR 3">
    <location>
        <begin position="203"/>
        <end position="223"/>
    </location>
</feature>
<feature type="repeat" description="LRR 4">
    <location>
        <begin position="224"/>
        <end position="248"/>
    </location>
</feature>
<feature type="repeat" description="ARM 1">
    <location>
        <begin position="315"/>
        <end position="356"/>
    </location>
</feature>
<feature type="repeat" description="ARM 2">
    <location>
        <begin position="401"/>
        <end position="439"/>
    </location>
</feature>
<feature type="repeat" description="ARM 3">
    <location>
        <begin position="440"/>
        <end position="481"/>
    </location>
</feature>
<feature type="domain" description="PNPLA" evidence="2">
    <location>
        <begin position="502"/>
        <end position="746"/>
    </location>
</feature>
<feature type="region of interest" description="Disordered" evidence="3">
    <location>
        <begin position="1183"/>
        <end position="1253"/>
    </location>
</feature>
<feature type="short sequence motif" description="GXGXXG" evidence="2">
    <location>
        <begin position="506"/>
        <end position="511"/>
    </location>
</feature>
<feature type="short sequence motif" description="GXSXG" evidence="2">
    <location>
        <begin position="538"/>
        <end position="542"/>
    </location>
</feature>
<feature type="short sequence motif" description="DGA/G" evidence="2">
    <location>
        <begin position="733"/>
        <end position="735"/>
    </location>
</feature>
<feature type="compositionally biased region" description="Polar residues" evidence="3">
    <location>
        <begin position="1188"/>
        <end position="1208"/>
    </location>
</feature>
<feature type="compositionally biased region" description="Acidic residues" evidence="3">
    <location>
        <begin position="1216"/>
        <end position="1235"/>
    </location>
</feature>
<feature type="active site" description="Nucleophile" evidence="2">
    <location>
        <position position="540"/>
    </location>
</feature>
<feature type="active site" description="Proton acceptor" evidence="2">
    <location>
        <position position="733"/>
    </location>
</feature>
<proteinExistence type="inferred from homology"/>
<name>LPAI_ARATH</name>
<reference key="1">
    <citation type="journal article" date="2000" name="Nature">
        <title>Sequence and analysis of chromosome 1 of the plant Arabidopsis thaliana.</title>
        <authorList>
            <person name="Theologis A."/>
            <person name="Ecker J.R."/>
            <person name="Palm C.J."/>
            <person name="Federspiel N.A."/>
            <person name="Kaul S."/>
            <person name="White O."/>
            <person name="Alonso J."/>
            <person name="Altafi H."/>
            <person name="Araujo R."/>
            <person name="Bowman C.L."/>
            <person name="Brooks S.Y."/>
            <person name="Buehler E."/>
            <person name="Chan A."/>
            <person name="Chao Q."/>
            <person name="Chen H."/>
            <person name="Cheuk R.F."/>
            <person name="Chin C.W."/>
            <person name="Chung M.K."/>
            <person name="Conn L."/>
            <person name="Conway A.B."/>
            <person name="Conway A.R."/>
            <person name="Creasy T.H."/>
            <person name="Dewar K."/>
            <person name="Dunn P."/>
            <person name="Etgu P."/>
            <person name="Feldblyum T.V."/>
            <person name="Feng J.-D."/>
            <person name="Fong B."/>
            <person name="Fujii C.Y."/>
            <person name="Gill J.E."/>
            <person name="Goldsmith A.D."/>
            <person name="Haas B."/>
            <person name="Hansen N.F."/>
            <person name="Hughes B."/>
            <person name="Huizar L."/>
            <person name="Hunter J.L."/>
            <person name="Jenkins J."/>
            <person name="Johnson-Hopson C."/>
            <person name="Khan S."/>
            <person name="Khaykin E."/>
            <person name="Kim C.J."/>
            <person name="Koo H.L."/>
            <person name="Kremenetskaia I."/>
            <person name="Kurtz D.B."/>
            <person name="Kwan A."/>
            <person name="Lam B."/>
            <person name="Langin-Hooper S."/>
            <person name="Lee A."/>
            <person name="Lee J.M."/>
            <person name="Lenz C.A."/>
            <person name="Li J.H."/>
            <person name="Li Y.-P."/>
            <person name="Lin X."/>
            <person name="Liu S.X."/>
            <person name="Liu Z.A."/>
            <person name="Luros J.S."/>
            <person name="Maiti R."/>
            <person name="Marziali A."/>
            <person name="Militscher J."/>
            <person name="Miranda M."/>
            <person name="Nguyen M."/>
            <person name="Nierman W.C."/>
            <person name="Osborne B.I."/>
            <person name="Pai G."/>
            <person name="Peterson J."/>
            <person name="Pham P.K."/>
            <person name="Rizzo M."/>
            <person name="Rooney T."/>
            <person name="Rowley D."/>
            <person name="Sakano H."/>
            <person name="Salzberg S.L."/>
            <person name="Schwartz J.R."/>
            <person name="Shinn P."/>
            <person name="Southwick A.M."/>
            <person name="Sun H."/>
            <person name="Tallon L.J."/>
            <person name="Tambunga G."/>
            <person name="Toriumi M.J."/>
            <person name="Town C.D."/>
            <person name="Utterback T."/>
            <person name="Van Aken S."/>
            <person name="Vaysberg M."/>
            <person name="Vysotskaia V.S."/>
            <person name="Walker M."/>
            <person name="Wu D."/>
            <person name="Yu G."/>
            <person name="Fraser C.M."/>
            <person name="Venter J.C."/>
            <person name="Davis R.W."/>
        </authorList>
    </citation>
    <scope>NUCLEOTIDE SEQUENCE [LARGE SCALE GENOMIC DNA]</scope>
    <source>
        <strain>cv. Columbia</strain>
    </source>
</reference>
<reference key="2">
    <citation type="journal article" date="2017" name="Plant J.">
        <title>Araport11: a complete reannotation of the Arabidopsis thaliana reference genome.</title>
        <authorList>
            <person name="Cheng C.Y."/>
            <person name="Krishnakumar V."/>
            <person name="Chan A.P."/>
            <person name="Thibaud-Nissen F."/>
            <person name="Schobel S."/>
            <person name="Town C.D."/>
        </authorList>
    </citation>
    <scope>GENOME REANNOTATION</scope>
    <source>
        <strain>cv. Columbia</strain>
    </source>
</reference>
<reference key="3">
    <citation type="journal article" date="2002" name="Plant Physiol.">
        <title>Molecular identification of cytosolic, patatin-related phospholipases A from Arabidopsis with potential functions in plant signal transduction.</title>
        <authorList>
            <person name="Holk A."/>
            <person name="Rietz S."/>
            <person name="Zahn M."/>
            <person name="Quader H."/>
            <person name="Scherer G.F."/>
        </authorList>
    </citation>
    <scope>SUBCELLULAR LOCATION</scope>
</reference>
<reference key="4">
    <citation type="journal article" date="2007" name="J. Biol. Chem.">
        <title>AtPLAI is an acyl hydrolase involved in basal jasmonic acid production and Arabidopsis resistance to Botrytis cinerea.</title>
        <authorList>
            <person name="Yang W."/>
            <person name="Devaiah S.P."/>
            <person name="Pan X."/>
            <person name="Isaac G."/>
            <person name="Welti R."/>
            <person name="Wang X."/>
        </authorList>
    </citation>
    <scope>FUNCTION</scope>
    <scope>DISRUPTION PHENOTYPE</scope>
</reference>
<organism>
    <name type="scientific">Arabidopsis thaliana</name>
    <name type="common">Mouse-ear cress</name>
    <dbReference type="NCBI Taxonomy" id="3702"/>
    <lineage>
        <taxon>Eukaryota</taxon>
        <taxon>Viridiplantae</taxon>
        <taxon>Streptophyta</taxon>
        <taxon>Embryophyta</taxon>
        <taxon>Tracheophyta</taxon>
        <taxon>Spermatophyta</taxon>
        <taxon>Magnoliopsida</taxon>
        <taxon>eudicotyledons</taxon>
        <taxon>Gunneridae</taxon>
        <taxon>Pentapetalae</taxon>
        <taxon>rosids</taxon>
        <taxon>malvids</taxon>
        <taxon>Brassicales</taxon>
        <taxon>Brassicaceae</taxon>
        <taxon>Camelineae</taxon>
        <taxon>Arabidopsis</taxon>
    </lineage>
</organism>
<sequence>MSSTCSSPSAVEDPELGFRIDLDWTAGDSEDQVALRLESQLMVALPAPHDTVVVELKGIGDDDEGGLENVGLEMRVEKRREPLRAVTLMKAVGSGQQYDGVGVLTRLMRSDMMPAAIPAPAIDVASSCGVHWKTVTSLSLSGCGLLVMPVEVTELPLLEKLCLEHNKLSVLPPEIGKLKNLKILRVDNNMLISVPVELRQCVGLVELSLEHNKLVRPLLDFRAMAGLRILRLFGNPLEFLPEILPLHQLRHLSLVNIRIVSDENLRSVNVQIETENTSYFGASRHKLSAFSPLIFRSSSCHHPLLASTLVKIMQDEGNRSVIGKDENAVRQLISMITSDNQHVVEQACVALSSLARDVGVAMQLMKCDIMKPTETVLKSSSPDEVISVLQVVVTLAFVSDSVSQKMLTKDMLKALKSLCAHKNPEVQRQALLAVGNLAFCLENRRILITSESLRELLMRLIVTPEPRVNKAAARALAILGENEILRRSIKGRQVPKQGLRILTMDGGGMKGLATVQILKEIEKGSGKPIHELFDLICGTSTGGMLAIALGVKLMTLEQCEEIYKNLGKLVFAESVPKDNEAASWREKLDQLYKSSSQSFRVVIHGSKHSANEFERLLKEMCADEDGDLLIESAVKNVPKVFVVSTLVSVMPAQPFIFRNYQYPVGTPEMSYAFSDHSGGSTLTSSTASDQAGYYKQSAFMGSCKHQVWQAIRASSAAPYYLDDFSVDSYRWQDGAIVANNPTIFAIREAQLLWPDTKIDCLVSIGSGSVPTRVRKGGWRYLDTGQVLIESACSVERVEEALSTLLPMLPEIQYFRFNPVDDRCGMELDETDPAIWLKLEAAIEEFIQSNPQVFKNVCERLTLPFLNDEKWCDNLKPRFMNGKLPNSRVESSPSLGWRRNVLLMEAQHSPDSGRVKYHARALESFCSNNGIKLSSLHTTATPGCQKPSPGTAFPTPFTSPLITGSLPPSPLLFTPELGPQKFNRIDMVPPLSLDGGHVGKTVMSPPSSPPRQRQLYLPLRQMHEKLQNLPQVGILHLSLQNDSNGSILSWQNDVFVVAEPGDLADKFLQSVKVSILSVMQSNRRKAASVLSNICSISDLVRSKKCFQVGNIIHRYIGRQTLVMEDDQEIASFMFRRTVPSAHLTPDDIRWMVGAWRDRIIVFSGTFGPTQAVVKAFLDSGAKAVIGPSNEPQETPLITSQGSSEYNIGDQNGKFEIGEEEDEDEEVNEETEREEMEPPTPTSDWEDSDHEKTNRDGKYCGLWEDDEEEVSEFVCQLYDQLFRENSRVDVALQKALASHRKLRYTCHLPNV</sequence>